<protein>
    <recommendedName>
        <fullName evidence="1">Large ribosomal subunit protein eL34</fullName>
    </recommendedName>
    <alternativeName>
        <fullName>50S ribosomal protein L34e</fullName>
    </alternativeName>
</protein>
<reference key="1">
    <citation type="journal article" date="2002" name="Proc. Natl. Acad. Sci. U.S.A.">
        <title>Genome sequence of the hyperthermophilic crenarchaeon Pyrobaculum aerophilum.</title>
        <authorList>
            <person name="Fitz-Gibbon S.T."/>
            <person name="Ladner H."/>
            <person name="Kim U.-J."/>
            <person name="Stetter K.O."/>
            <person name="Simon M.I."/>
            <person name="Miller J.H."/>
        </authorList>
    </citation>
    <scope>NUCLEOTIDE SEQUENCE [LARGE SCALE GENOMIC DNA]</scope>
    <source>
        <strain>ATCC 51768 / DSM 7523 / JCM 9630 / CIP 104966 / NBRC 100827 / IM2</strain>
    </source>
</reference>
<sequence>MPRPAYRSRSVRRIKVKTPGGRTVIHYEKRAKGVPKCPITGLPIGGMNKKVYRFGIKIRAPSRPYGGVYSHKVLARALRLAVRK</sequence>
<dbReference type="EMBL" id="AE009441">
    <property type="protein sequence ID" value="AAL64769.1"/>
    <property type="molecule type" value="Genomic_DNA"/>
</dbReference>
<dbReference type="RefSeq" id="WP_011009237.1">
    <property type="nucleotide sequence ID" value="NC_003364.1"/>
</dbReference>
<dbReference type="SMR" id="Q8ZTJ2"/>
<dbReference type="FunCoup" id="Q8ZTJ2">
    <property type="interactions" value="59"/>
</dbReference>
<dbReference type="STRING" id="178306.PAE3224"/>
<dbReference type="EnsemblBacteria" id="AAL64769">
    <property type="protein sequence ID" value="AAL64769"/>
    <property type="gene ID" value="PAE3224"/>
</dbReference>
<dbReference type="GeneID" id="1463952"/>
<dbReference type="KEGG" id="pai:PAE3224"/>
<dbReference type="PATRIC" id="fig|178306.9.peg.2428"/>
<dbReference type="eggNOG" id="arCOG04168">
    <property type="taxonomic scope" value="Archaea"/>
</dbReference>
<dbReference type="HOGENOM" id="CLU_118652_2_0_2"/>
<dbReference type="InParanoid" id="Q8ZTJ2"/>
<dbReference type="Proteomes" id="UP000002439">
    <property type="component" value="Chromosome"/>
</dbReference>
<dbReference type="GO" id="GO:1990904">
    <property type="term" value="C:ribonucleoprotein complex"/>
    <property type="evidence" value="ECO:0007669"/>
    <property type="project" value="UniProtKB-KW"/>
</dbReference>
<dbReference type="GO" id="GO:0005840">
    <property type="term" value="C:ribosome"/>
    <property type="evidence" value="ECO:0007669"/>
    <property type="project" value="UniProtKB-KW"/>
</dbReference>
<dbReference type="GO" id="GO:0003735">
    <property type="term" value="F:structural constituent of ribosome"/>
    <property type="evidence" value="ECO:0007669"/>
    <property type="project" value="InterPro"/>
</dbReference>
<dbReference type="GO" id="GO:0006412">
    <property type="term" value="P:translation"/>
    <property type="evidence" value="ECO:0007669"/>
    <property type="project" value="UniProtKB-UniRule"/>
</dbReference>
<dbReference type="Gene3D" id="6.20.370.70">
    <property type="match status" value="1"/>
</dbReference>
<dbReference type="HAMAP" id="MF_00349">
    <property type="entry name" value="Ribosomal_eL34"/>
    <property type="match status" value="1"/>
</dbReference>
<dbReference type="InterPro" id="IPR008195">
    <property type="entry name" value="Ribosomal_eL34"/>
</dbReference>
<dbReference type="InterPro" id="IPR018065">
    <property type="entry name" value="Ribosomal_eL34_CS"/>
</dbReference>
<dbReference type="InterPro" id="IPR047868">
    <property type="entry name" value="Ribosomal_L34e_arc-type"/>
</dbReference>
<dbReference type="NCBIfam" id="NF003143">
    <property type="entry name" value="PRK04059.1"/>
    <property type="match status" value="1"/>
</dbReference>
<dbReference type="Pfam" id="PF01199">
    <property type="entry name" value="Ribosomal_L34e"/>
    <property type="match status" value="1"/>
</dbReference>
<dbReference type="PRINTS" id="PR01250">
    <property type="entry name" value="RIBOSOMALL34"/>
</dbReference>
<dbReference type="PROSITE" id="PS01145">
    <property type="entry name" value="RIBOSOMAL_L34E"/>
    <property type="match status" value="1"/>
</dbReference>
<name>RL34_PYRAE</name>
<proteinExistence type="inferred from homology"/>
<feature type="chain" id="PRO_0000131852" description="Large ribosomal subunit protein eL34">
    <location>
        <begin position="1"/>
        <end position="84"/>
    </location>
</feature>
<comment type="similarity">
    <text evidence="1">Belongs to the eukaryotic ribosomal protein eL34 family.</text>
</comment>
<evidence type="ECO:0000305" key="1"/>
<accession>Q8ZTJ2</accession>
<organism>
    <name type="scientific">Pyrobaculum aerophilum (strain ATCC 51768 / DSM 7523 / JCM 9630 / CIP 104966 / NBRC 100827 / IM2)</name>
    <dbReference type="NCBI Taxonomy" id="178306"/>
    <lineage>
        <taxon>Archaea</taxon>
        <taxon>Thermoproteota</taxon>
        <taxon>Thermoprotei</taxon>
        <taxon>Thermoproteales</taxon>
        <taxon>Thermoproteaceae</taxon>
        <taxon>Pyrobaculum</taxon>
    </lineage>
</organism>
<keyword id="KW-1185">Reference proteome</keyword>
<keyword id="KW-0687">Ribonucleoprotein</keyword>
<keyword id="KW-0689">Ribosomal protein</keyword>
<gene>
    <name type="primary">ribL34e</name>
    <name type="ordered locus">PAE3224</name>
</gene>